<accession>Q1D760</accession>
<reference key="1">
    <citation type="journal article" date="2006" name="Proc. Natl. Acad. Sci. U.S.A.">
        <title>Evolution of sensory complexity recorded in a myxobacterial genome.</title>
        <authorList>
            <person name="Goldman B.S."/>
            <person name="Nierman W.C."/>
            <person name="Kaiser D."/>
            <person name="Slater S.C."/>
            <person name="Durkin A.S."/>
            <person name="Eisen J.A."/>
            <person name="Ronning C.M."/>
            <person name="Barbazuk W.B."/>
            <person name="Blanchard M."/>
            <person name="Field C."/>
            <person name="Halling C."/>
            <person name="Hinkle G."/>
            <person name="Iartchuk O."/>
            <person name="Kim H.S."/>
            <person name="Mackenzie C."/>
            <person name="Madupu R."/>
            <person name="Miller N."/>
            <person name="Shvartsbeyn A."/>
            <person name="Sullivan S.A."/>
            <person name="Vaudin M."/>
            <person name="Wiegand R."/>
            <person name="Kaplan H.B."/>
        </authorList>
    </citation>
    <scope>NUCLEOTIDE SEQUENCE [LARGE SCALE GENOMIC DNA]</scope>
    <source>
        <strain>DK1622</strain>
    </source>
</reference>
<name>RL6_MYXXD</name>
<protein>
    <recommendedName>
        <fullName evidence="1">Large ribosomal subunit protein uL6</fullName>
    </recommendedName>
    <alternativeName>
        <fullName evidence="2">50S ribosomal protein L6</fullName>
    </alternativeName>
</protein>
<evidence type="ECO:0000255" key="1">
    <source>
        <dbReference type="HAMAP-Rule" id="MF_01365"/>
    </source>
</evidence>
<evidence type="ECO:0000305" key="2"/>
<comment type="function">
    <text evidence="1">This protein binds to the 23S rRNA, and is important in its secondary structure. It is located near the subunit interface in the base of the L7/L12 stalk, and near the tRNA binding site of the peptidyltransferase center.</text>
</comment>
<comment type="subunit">
    <text evidence="1">Part of the 50S ribosomal subunit.</text>
</comment>
<comment type="similarity">
    <text evidence="1">Belongs to the universal ribosomal protein uL6 family.</text>
</comment>
<keyword id="KW-1185">Reference proteome</keyword>
<keyword id="KW-0687">Ribonucleoprotein</keyword>
<keyword id="KW-0689">Ribosomal protein</keyword>
<keyword id="KW-0694">RNA-binding</keyword>
<keyword id="KW-0699">rRNA-binding</keyword>
<proteinExistence type="inferred from homology"/>
<sequence length="188" mass="20345">MSRIGKLAIKLGDKTKAVIAGEQVNFEGPKGKLSVKLPGKVKVEIKDGQMTVQREDDSREARSLHGLTRTILANAAKGVSTGFEKKLDIRGVGFRAEVKGKAIHFSLGFSHPVVFNLPEGVTAEVDKAPRNEDSLPTVGLTLRSSDKEALGATAVNIRSLRPPEPYKGKGIKYAEERIRRKEGKTGTT</sequence>
<gene>
    <name evidence="1" type="primary">rplF</name>
    <name type="ordered locus">MXAN_3314</name>
</gene>
<organism>
    <name type="scientific">Myxococcus xanthus (strain DK1622)</name>
    <dbReference type="NCBI Taxonomy" id="246197"/>
    <lineage>
        <taxon>Bacteria</taxon>
        <taxon>Pseudomonadati</taxon>
        <taxon>Myxococcota</taxon>
        <taxon>Myxococcia</taxon>
        <taxon>Myxococcales</taxon>
        <taxon>Cystobacterineae</taxon>
        <taxon>Myxococcaceae</taxon>
        <taxon>Myxococcus</taxon>
    </lineage>
</organism>
<dbReference type="EMBL" id="CP000113">
    <property type="protein sequence ID" value="ABF89255.1"/>
    <property type="molecule type" value="Genomic_DNA"/>
</dbReference>
<dbReference type="RefSeq" id="WP_011553350.1">
    <property type="nucleotide sequence ID" value="NC_008095.1"/>
</dbReference>
<dbReference type="SMR" id="Q1D760"/>
<dbReference type="STRING" id="246197.MXAN_3314"/>
<dbReference type="EnsemblBacteria" id="ABF89255">
    <property type="protein sequence ID" value="ABF89255"/>
    <property type="gene ID" value="MXAN_3314"/>
</dbReference>
<dbReference type="GeneID" id="41360667"/>
<dbReference type="KEGG" id="mxa:MXAN_3314"/>
<dbReference type="eggNOG" id="COG0097">
    <property type="taxonomic scope" value="Bacteria"/>
</dbReference>
<dbReference type="HOGENOM" id="CLU_065464_1_2_7"/>
<dbReference type="OrthoDB" id="9805007at2"/>
<dbReference type="Proteomes" id="UP000002402">
    <property type="component" value="Chromosome"/>
</dbReference>
<dbReference type="GO" id="GO:0022625">
    <property type="term" value="C:cytosolic large ribosomal subunit"/>
    <property type="evidence" value="ECO:0007669"/>
    <property type="project" value="TreeGrafter"/>
</dbReference>
<dbReference type="GO" id="GO:0019843">
    <property type="term" value="F:rRNA binding"/>
    <property type="evidence" value="ECO:0007669"/>
    <property type="project" value="UniProtKB-UniRule"/>
</dbReference>
<dbReference type="GO" id="GO:0003735">
    <property type="term" value="F:structural constituent of ribosome"/>
    <property type="evidence" value="ECO:0007669"/>
    <property type="project" value="InterPro"/>
</dbReference>
<dbReference type="GO" id="GO:0002181">
    <property type="term" value="P:cytoplasmic translation"/>
    <property type="evidence" value="ECO:0007669"/>
    <property type="project" value="TreeGrafter"/>
</dbReference>
<dbReference type="Gene3D" id="3.90.930.12">
    <property type="entry name" value="Ribosomal protein L6, alpha-beta domain"/>
    <property type="match status" value="2"/>
</dbReference>
<dbReference type="HAMAP" id="MF_01365_B">
    <property type="entry name" value="Ribosomal_uL6_B"/>
    <property type="match status" value="1"/>
</dbReference>
<dbReference type="InterPro" id="IPR000702">
    <property type="entry name" value="Ribosomal_uL6-like"/>
</dbReference>
<dbReference type="InterPro" id="IPR036789">
    <property type="entry name" value="Ribosomal_uL6-like_a/b-dom_sf"/>
</dbReference>
<dbReference type="InterPro" id="IPR020040">
    <property type="entry name" value="Ribosomal_uL6_a/b-dom"/>
</dbReference>
<dbReference type="InterPro" id="IPR019906">
    <property type="entry name" value="Ribosomal_uL6_bac-type"/>
</dbReference>
<dbReference type="InterPro" id="IPR002358">
    <property type="entry name" value="Ribosomal_uL6_CS"/>
</dbReference>
<dbReference type="NCBIfam" id="TIGR03654">
    <property type="entry name" value="L6_bact"/>
    <property type="match status" value="1"/>
</dbReference>
<dbReference type="PANTHER" id="PTHR11655">
    <property type="entry name" value="60S/50S RIBOSOMAL PROTEIN L6/L9"/>
    <property type="match status" value="1"/>
</dbReference>
<dbReference type="PANTHER" id="PTHR11655:SF14">
    <property type="entry name" value="LARGE RIBOSOMAL SUBUNIT PROTEIN UL6M"/>
    <property type="match status" value="1"/>
</dbReference>
<dbReference type="Pfam" id="PF00347">
    <property type="entry name" value="Ribosomal_L6"/>
    <property type="match status" value="2"/>
</dbReference>
<dbReference type="PIRSF" id="PIRSF002162">
    <property type="entry name" value="Ribosomal_L6"/>
    <property type="match status" value="1"/>
</dbReference>
<dbReference type="PRINTS" id="PR00059">
    <property type="entry name" value="RIBOSOMALL6"/>
</dbReference>
<dbReference type="SUPFAM" id="SSF56053">
    <property type="entry name" value="Ribosomal protein L6"/>
    <property type="match status" value="2"/>
</dbReference>
<dbReference type="PROSITE" id="PS00525">
    <property type="entry name" value="RIBOSOMAL_L6_1"/>
    <property type="match status" value="1"/>
</dbReference>
<feature type="chain" id="PRO_1000055272" description="Large ribosomal subunit protein uL6">
    <location>
        <begin position="1"/>
        <end position="188"/>
    </location>
</feature>